<sequence>MPEIAQPTPMMRQYLETKARYPDALLFFRLGDFYELFFEDALTASEALQITLTARAKGDDKVPMCGVPHHAARGYVARLLEKGFKVAICDQVEEPGKSAIVKREVTRVVTPGMVFDDQVLDPREASYLGVVALAEGRAGLALLDASTGQLQCGEVPDDARAVDELRRAGVRELVLPLGADAARAERIERAVGVPAARRPAADYERADDRLRRHLGVASLDGFGVGGEPLGLAAAAAALAYLADTQRATPRHVDRVSRLRTEDVLLLDEATRTNLELERTLNGGRKKGSLLALLDRSVTAPGGRRLAEWLRYPLTELAPIHARLDAVEELAGASVAREDLAAALRPVADAERLLSRLVLGQGNARDLRALAGALLALPALAELLGGRAAALLRDAGEGTRGLEELAAHLDRAVAEEPPATLREGGIIRRGFSPELDEIVAVAEDGKGFIARLEAREKERTGIGSLKVRFNKVFGYYLEVTKANLHAVPSDYERRQTTVGGERFVTPELKRFEETVLTAEERRIAVEGRLFEELRQRVAEAAPRIRTAADAVATADALLALARVAAERGYCRPEVDGSEVLEIVDGRHPVVEAVLPEGPAGFVPNDVLVASRGALECERLGALHVITGPNMAGKSTVMRQAALVTLLAQMGAFVPARKARVGIVDRIFTRVGASDDLARGRSTFMVEMTETAAILHNATRRSLVVLDEIGRGTSTFDGVSIAWAVAEHLHDQVGCRTLFATHYHELQDLARERPAVRNLTVAVREVGDRVVFLRKLVQGGASRSYGIEVAKLAGLPAEVLARAREILKNLEALEVDEGGHAALARGRKTRRADPQSQLGLFAPAPAPADPALEEIASALRATEIDALRPLDALNLLAAWRAKLR</sequence>
<dbReference type="EMBL" id="CP000769">
    <property type="protein sequence ID" value="ABS26310.1"/>
    <property type="molecule type" value="Genomic_DNA"/>
</dbReference>
<dbReference type="RefSeq" id="WP_012096890.1">
    <property type="nucleotide sequence ID" value="NC_009675.1"/>
</dbReference>
<dbReference type="SMR" id="A7HC64"/>
<dbReference type="STRING" id="404589.Anae109_2107"/>
<dbReference type="KEGG" id="afw:Anae109_2107"/>
<dbReference type="eggNOG" id="COG0249">
    <property type="taxonomic scope" value="Bacteria"/>
</dbReference>
<dbReference type="HOGENOM" id="CLU_002472_3_1_7"/>
<dbReference type="OrthoDB" id="9802448at2"/>
<dbReference type="Proteomes" id="UP000006382">
    <property type="component" value="Chromosome"/>
</dbReference>
<dbReference type="GO" id="GO:0005829">
    <property type="term" value="C:cytosol"/>
    <property type="evidence" value="ECO:0007669"/>
    <property type="project" value="TreeGrafter"/>
</dbReference>
<dbReference type="GO" id="GO:0005524">
    <property type="term" value="F:ATP binding"/>
    <property type="evidence" value="ECO:0007669"/>
    <property type="project" value="UniProtKB-UniRule"/>
</dbReference>
<dbReference type="GO" id="GO:0140664">
    <property type="term" value="F:ATP-dependent DNA damage sensor activity"/>
    <property type="evidence" value="ECO:0007669"/>
    <property type="project" value="InterPro"/>
</dbReference>
<dbReference type="GO" id="GO:0003684">
    <property type="term" value="F:damaged DNA binding"/>
    <property type="evidence" value="ECO:0007669"/>
    <property type="project" value="UniProtKB-UniRule"/>
</dbReference>
<dbReference type="GO" id="GO:0030983">
    <property type="term" value="F:mismatched DNA binding"/>
    <property type="evidence" value="ECO:0007669"/>
    <property type="project" value="InterPro"/>
</dbReference>
<dbReference type="GO" id="GO:0006298">
    <property type="term" value="P:mismatch repair"/>
    <property type="evidence" value="ECO:0007669"/>
    <property type="project" value="UniProtKB-UniRule"/>
</dbReference>
<dbReference type="CDD" id="cd03284">
    <property type="entry name" value="ABC_MutS1"/>
    <property type="match status" value="1"/>
</dbReference>
<dbReference type="FunFam" id="3.40.1170.10:FF:000001">
    <property type="entry name" value="DNA mismatch repair protein MutS"/>
    <property type="match status" value="1"/>
</dbReference>
<dbReference type="FunFam" id="3.40.50.300:FF:000870">
    <property type="entry name" value="MutS protein homolog 4"/>
    <property type="match status" value="1"/>
</dbReference>
<dbReference type="Gene3D" id="1.10.1420.10">
    <property type="match status" value="2"/>
</dbReference>
<dbReference type="Gene3D" id="3.40.1170.10">
    <property type="entry name" value="DNA repair protein MutS, domain I"/>
    <property type="match status" value="1"/>
</dbReference>
<dbReference type="Gene3D" id="3.30.420.110">
    <property type="entry name" value="MutS, connector domain"/>
    <property type="match status" value="1"/>
</dbReference>
<dbReference type="Gene3D" id="3.40.50.300">
    <property type="entry name" value="P-loop containing nucleotide triphosphate hydrolases"/>
    <property type="match status" value="1"/>
</dbReference>
<dbReference type="HAMAP" id="MF_00096">
    <property type="entry name" value="MutS"/>
    <property type="match status" value="1"/>
</dbReference>
<dbReference type="InterPro" id="IPR005748">
    <property type="entry name" value="DNA_mismatch_repair_MutS"/>
</dbReference>
<dbReference type="InterPro" id="IPR007695">
    <property type="entry name" value="DNA_mismatch_repair_MutS-lik_N"/>
</dbReference>
<dbReference type="InterPro" id="IPR017261">
    <property type="entry name" value="DNA_mismatch_repair_MutS/MSH"/>
</dbReference>
<dbReference type="InterPro" id="IPR000432">
    <property type="entry name" value="DNA_mismatch_repair_MutS_C"/>
</dbReference>
<dbReference type="InterPro" id="IPR007861">
    <property type="entry name" value="DNA_mismatch_repair_MutS_clamp"/>
</dbReference>
<dbReference type="InterPro" id="IPR007696">
    <property type="entry name" value="DNA_mismatch_repair_MutS_core"/>
</dbReference>
<dbReference type="InterPro" id="IPR016151">
    <property type="entry name" value="DNA_mismatch_repair_MutS_N"/>
</dbReference>
<dbReference type="InterPro" id="IPR036187">
    <property type="entry name" value="DNA_mismatch_repair_MutS_sf"/>
</dbReference>
<dbReference type="InterPro" id="IPR007860">
    <property type="entry name" value="DNA_mmatch_repair_MutS_con_dom"/>
</dbReference>
<dbReference type="InterPro" id="IPR045076">
    <property type="entry name" value="MutS"/>
</dbReference>
<dbReference type="InterPro" id="IPR036678">
    <property type="entry name" value="MutS_con_dom_sf"/>
</dbReference>
<dbReference type="InterPro" id="IPR027417">
    <property type="entry name" value="P-loop_NTPase"/>
</dbReference>
<dbReference type="NCBIfam" id="TIGR01070">
    <property type="entry name" value="mutS1"/>
    <property type="match status" value="1"/>
</dbReference>
<dbReference type="NCBIfam" id="NF003810">
    <property type="entry name" value="PRK05399.1"/>
    <property type="match status" value="1"/>
</dbReference>
<dbReference type="PANTHER" id="PTHR11361:SF34">
    <property type="entry name" value="DNA MISMATCH REPAIR PROTEIN MSH1, MITOCHONDRIAL"/>
    <property type="match status" value="1"/>
</dbReference>
<dbReference type="PANTHER" id="PTHR11361">
    <property type="entry name" value="DNA MISMATCH REPAIR PROTEIN MUTS FAMILY MEMBER"/>
    <property type="match status" value="1"/>
</dbReference>
<dbReference type="Pfam" id="PF01624">
    <property type="entry name" value="MutS_I"/>
    <property type="match status" value="1"/>
</dbReference>
<dbReference type="Pfam" id="PF05188">
    <property type="entry name" value="MutS_II"/>
    <property type="match status" value="1"/>
</dbReference>
<dbReference type="Pfam" id="PF05192">
    <property type="entry name" value="MutS_III"/>
    <property type="match status" value="1"/>
</dbReference>
<dbReference type="Pfam" id="PF05190">
    <property type="entry name" value="MutS_IV"/>
    <property type="match status" value="1"/>
</dbReference>
<dbReference type="Pfam" id="PF00488">
    <property type="entry name" value="MutS_V"/>
    <property type="match status" value="1"/>
</dbReference>
<dbReference type="PIRSF" id="PIRSF037677">
    <property type="entry name" value="DNA_mis_repair_Msh6"/>
    <property type="match status" value="1"/>
</dbReference>
<dbReference type="SMART" id="SM00534">
    <property type="entry name" value="MUTSac"/>
    <property type="match status" value="1"/>
</dbReference>
<dbReference type="SMART" id="SM00533">
    <property type="entry name" value="MUTSd"/>
    <property type="match status" value="1"/>
</dbReference>
<dbReference type="SUPFAM" id="SSF55271">
    <property type="entry name" value="DNA repair protein MutS, domain I"/>
    <property type="match status" value="1"/>
</dbReference>
<dbReference type="SUPFAM" id="SSF53150">
    <property type="entry name" value="DNA repair protein MutS, domain II"/>
    <property type="match status" value="1"/>
</dbReference>
<dbReference type="SUPFAM" id="SSF48334">
    <property type="entry name" value="DNA repair protein MutS, domain III"/>
    <property type="match status" value="1"/>
</dbReference>
<dbReference type="SUPFAM" id="SSF52540">
    <property type="entry name" value="P-loop containing nucleoside triphosphate hydrolases"/>
    <property type="match status" value="1"/>
</dbReference>
<dbReference type="PROSITE" id="PS00486">
    <property type="entry name" value="DNA_MISMATCH_REPAIR_2"/>
    <property type="match status" value="1"/>
</dbReference>
<protein>
    <recommendedName>
        <fullName evidence="1">DNA mismatch repair protein MutS</fullName>
    </recommendedName>
</protein>
<proteinExistence type="inferred from homology"/>
<evidence type="ECO:0000255" key="1">
    <source>
        <dbReference type="HAMAP-Rule" id="MF_00096"/>
    </source>
</evidence>
<accession>A7HC64</accession>
<keyword id="KW-0067">ATP-binding</keyword>
<keyword id="KW-0227">DNA damage</keyword>
<keyword id="KW-0234">DNA repair</keyword>
<keyword id="KW-0238">DNA-binding</keyword>
<keyword id="KW-0547">Nucleotide-binding</keyword>
<keyword id="KW-1185">Reference proteome</keyword>
<comment type="function">
    <text evidence="1">This protein is involved in the repair of mismatches in DNA. It is possible that it carries out the mismatch recognition step. This protein has a weak ATPase activity.</text>
</comment>
<comment type="similarity">
    <text evidence="1">Belongs to the DNA mismatch repair MutS family.</text>
</comment>
<gene>
    <name evidence="1" type="primary">mutS</name>
    <name type="ordered locus">Anae109_2107</name>
</gene>
<reference key="1">
    <citation type="journal article" date="2015" name="Genome Announc.">
        <title>Complete genome sequence of Anaeromyxobacter sp. Fw109-5, an anaerobic, metal-reducing bacterium isolated from a contaminated subsurface environment.</title>
        <authorList>
            <person name="Hwang C."/>
            <person name="Copeland A."/>
            <person name="Lucas S."/>
            <person name="Lapidus A."/>
            <person name="Barry K."/>
            <person name="Glavina Del Rio T."/>
            <person name="Dalin E."/>
            <person name="Tice H."/>
            <person name="Pitluck S."/>
            <person name="Sims D."/>
            <person name="Brettin T."/>
            <person name="Bruce D.C."/>
            <person name="Detter J.C."/>
            <person name="Han C.S."/>
            <person name="Schmutz J."/>
            <person name="Larimer F.W."/>
            <person name="Land M.L."/>
            <person name="Hauser L.J."/>
            <person name="Kyrpides N."/>
            <person name="Lykidis A."/>
            <person name="Richardson P."/>
            <person name="Belieav A."/>
            <person name="Sanford R.A."/>
            <person name="Loeffler F.E."/>
            <person name="Fields M.W."/>
        </authorList>
    </citation>
    <scope>NUCLEOTIDE SEQUENCE [LARGE SCALE GENOMIC DNA]</scope>
    <source>
        <strain>Fw109-5</strain>
    </source>
</reference>
<name>MUTS_ANADF</name>
<feature type="chain" id="PRO_0000335112" description="DNA mismatch repair protein MutS">
    <location>
        <begin position="1"/>
        <end position="882"/>
    </location>
</feature>
<feature type="binding site" evidence="1">
    <location>
        <begin position="626"/>
        <end position="633"/>
    </location>
    <ligand>
        <name>ATP</name>
        <dbReference type="ChEBI" id="CHEBI:30616"/>
    </ligand>
</feature>
<organism>
    <name type="scientific">Anaeromyxobacter sp. (strain Fw109-5)</name>
    <dbReference type="NCBI Taxonomy" id="404589"/>
    <lineage>
        <taxon>Bacteria</taxon>
        <taxon>Pseudomonadati</taxon>
        <taxon>Myxococcota</taxon>
        <taxon>Myxococcia</taxon>
        <taxon>Myxococcales</taxon>
        <taxon>Cystobacterineae</taxon>
        <taxon>Anaeromyxobacteraceae</taxon>
        <taxon>Anaeromyxobacter</taxon>
    </lineage>
</organism>